<name>HFLD_ACTSZ</name>
<reference key="1">
    <citation type="journal article" date="2010" name="BMC Genomics">
        <title>A genomic perspective on the potential of Actinobacillus succinogenes for industrial succinate production.</title>
        <authorList>
            <person name="McKinlay J.B."/>
            <person name="Laivenieks M."/>
            <person name="Schindler B.D."/>
            <person name="McKinlay A.A."/>
            <person name="Siddaramappa S."/>
            <person name="Challacombe J.F."/>
            <person name="Lowry S.R."/>
            <person name="Clum A."/>
            <person name="Lapidus A.L."/>
            <person name="Burkhart K.B."/>
            <person name="Harkins V."/>
            <person name="Vieille C."/>
        </authorList>
    </citation>
    <scope>NUCLEOTIDE SEQUENCE [LARGE SCALE GENOMIC DNA]</scope>
    <source>
        <strain>ATCC 55618 / DSM 22257 / CCUG 43843 / 130Z</strain>
    </source>
</reference>
<evidence type="ECO:0000255" key="1">
    <source>
        <dbReference type="HAMAP-Rule" id="MF_00695"/>
    </source>
</evidence>
<comment type="subcellular location">
    <subcellularLocation>
        <location>Cytoplasm</location>
    </subcellularLocation>
    <subcellularLocation>
        <location evidence="1">Cell inner membrane</location>
        <topology evidence="1">Peripheral membrane protein</topology>
        <orientation evidence="1">Cytoplasmic side</orientation>
    </subcellularLocation>
</comment>
<comment type="similarity">
    <text evidence="1">Belongs to the HflD family.</text>
</comment>
<protein>
    <recommendedName>
        <fullName evidence="1">High frequency lysogenization protein HflD homolog</fullName>
    </recommendedName>
</protein>
<gene>
    <name evidence="1" type="primary">hflD</name>
    <name type="ordered locus">Asuc_0028</name>
</gene>
<dbReference type="EMBL" id="CP000746">
    <property type="protein sequence ID" value="ABR73410.1"/>
    <property type="molecule type" value="Genomic_DNA"/>
</dbReference>
<dbReference type="RefSeq" id="WP_011978686.1">
    <property type="nucleotide sequence ID" value="NC_009655.1"/>
</dbReference>
<dbReference type="SMR" id="A6VKB3"/>
<dbReference type="STRING" id="339671.Asuc_0028"/>
<dbReference type="KEGG" id="asu:Asuc_0028"/>
<dbReference type="eggNOG" id="COG2915">
    <property type="taxonomic scope" value="Bacteria"/>
</dbReference>
<dbReference type="HOGENOM" id="CLU_098920_0_0_6"/>
<dbReference type="OrthoDB" id="9788031at2"/>
<dbReference type="Proteomes" id="UP000001114">
    <property type="component" value="Chromosome"/>
</dbReference>
<dbReference type="GO" id="GO:0005737">
    <property type="term" value="C:cytoplasm"/>
    <property type="evidence" value="ECO:0007669"/>
    <property type="project" value="UniProtKB-SubCell"/>
</dbReference>
<dbReference type="GO" id="GO:0005886">
    <property type="term" value="C:plasma membrane"/>
    <property type="evidence" value="ECO:0007669"/>
    <property type="project" value="UniProtKB-SubCell"/>
</dbReference>
<dbReference type="Gene3D" id="1.10.3890.10">
    <property type="entry name" value="HflD-like"/>
    <property type="match status" value="1"/>
</dbReference>
<dbReference type="HAMAP" id="MF_00695">
    <property type="entry name" value="HflD_protein"/>
    <property type="match status" value="1"/>
</dbReference>
<dbReference type="InterPro" id="IPR007451">
    <property type="entry name" value="HflD"/>
</dbReference>
<dbReference type="InterPro" id="IPR035932">
    <property type="entry name" value="HflD-like_sf"/>
</dbReference>
<dbReference type="NCBIfam" id="NF001246">
    <property type="entry name" value="PRK00218.1-2"/>
    <property type="match status" value="1"/>
</dbReference>
<dbReference type="NCBIfam" id="NF001248">
    <property type="entry name" value="PRK00218.1-4"/>
    <property type="match status" value="1"/>
</dbReference>
<dbReference type="PANTHER" id="PTHR38100">
    <property type="entry name" value="HIGH FREQUENCY LYSOGENIZATION PROTEIN HFLD"/>
    <property type="match status" value="1"/>
</dbReference>
<dbReference type="PANTHER" id="PTHR38100:SF1">
    <property type="entry name" value="HIGH FREQUENCY LYSOGENIZATION PROTEIN HFLD"/>
    <property type="match status" value="1"/>
</dbReference>
<dbReference type="Pfam" id="PF04356">
    <property type="entry name" value="DUF489"/>
    <property type="match status" value="1"/>
</dbReference>
<dbReference type="SUPFAM" id="SSF101322">
    <property type="entry name" value="YcfC-like"/>
    <property type="match status" value="1"/>
</dbReference>
<feature type="chain" id="PRO_1000072759" description="High frequency lysogenization protein HflD homolog">
    <location>
        <begin position="1"/>
        <end position="204"/>
    </location>
</feature>
<sequence length="204" mass="22602">MASDYFDIAIALAGVCQAAKLVQQFAHNGEADLNALETSLYSLLQTEPENIAAVYRGSLANIKLGLETLIEQLNAMDTELARYWLGILALSGKLTKSADAKNALASRMQYLPAQLEHYGLCSDMTFEKMATIYTDIISPLGKKIHVIGSSLYLQQPSMHNRIRACLLAGIRSAILWQQVGGTKWQILFSRRKILKAAKHIYETI</sequence>
<keyword id="KW-0997">Cell inner membrane</keyword>
<keyword id="KW-1003">Cell membrane</keyword>
<keyword id="KW-0963">Cytoplasm</keyword>
<keyword id="KW-0472">Membrane</keyword>
<keyword id="KW-1185">Reference proteome</keyword>
<proteinExistence type="inferred from homology"/>
<organism>
    <name type="scientific">Actinobacillus succinogenes (strain ATCC 55618 / DSM 22257 / CCUG 43843 / 130Z)</name>
    <dbReference type="NCBI Taxonomy" id="339671"/>
    <lineage>
        <taxon>Bacteria</taxon>
        <taxon>Pseudomonadati</taxon>
        <taxon>Pseudomonadota</taxon>
        <taxon>Gammaproteobacteria</taxon>
        <taxon>Pasteurellales</taxon>
        <taxon>Pasteurellaceae</taxon>
        <taxon>Actinobacillus</taxon>
    </lineage>
</organism>
<accession>A6VKB3</accession>